<comment type="function">
    <text evidence="1">May act as a transcriptional activator that promotes transcription of muscle-specific target genes and plays a role in muscle differentiation.</text>
</comment>
<comment type="subunit">
    <text>Efficient DNA binding requires dimerization with another bHLH protein.</text>
</comment>
<comment type="subcellular location">
    <subcellularLocation>
        <location>Nucleus</location>
    </subcellularLocation>
</comment>
<keyword id="KW-0010">Activator</keyword>
<keyword id="KW-0217">Developmental protein</keyword>
<keyword id="KW-0221">Differentiation</keyword>
<keyword id="KW-0238">DNA-binding</keyword>
<keyword id="KW-0517">Myogenesis</keyword>
<keyword id="KW-0539">Nucleus</keyword>
<keyword id="KW-0804">Transcription</keyword>
<keyword id="KW-0805">Transcription regulation</keyword>
<accession>Q91206</accession>
<name>MYOD2_ONCMY</name>
<gene>
    <name type="primary">myod2</name>
</gene>
<reference key="1">
    <citation type="journal article" date="1996" name="Comp. Biochem. Physiol.">
        <title>Genome of the rainbow trout (Oncorhynchus mykiss) encodes two distinct muscle regulatory factors with homology to myoD.</title>
        <authorList>
            <person name="Rescan P.Y."/>
            <person name="Gauvry L."/>
        </authorList>
    </citation>
    <scope>NUCLEOTIDE SEQUENCE [MRNA]</scope>
    <source>
        <tissue>Muscle</tissue>
    </source>
</reference>
<dbReference type="EMBL" id="Z46924">
    <property type="protein sequence ID" value="CAA87032.1"/>
    <property type="molecule type" value="mRNA"/>
</dbReference>
<dbReference type="PIR" id="S51641">
    <property type="entry name" value="S51641"/>
</dbReference>
<dbReference type="RefSeq" id="NP_001118200.1">
    <property type="nucleotide sequence ID" value="NM_001124728.1"/>
</dbReference>
<dbReference type="SMR" id="Q91206"/>
<dbReference type="GeneID" id="100136782"/>
<dbReference type="KEGG" id="omy:100136782"/>
<dbReference type="CTD" id="100136782"/>
<dbReference type="OrthoDB" id="10049614at2759"/>
<dbReference type="Proteomes" id="UP000694395">
    <property type="component" value="Unplaced"/>
</dbReference>
<dbReference type="GO" id="GO:0005634">
    <property type="term" value="C:nucleus"/>
    <property type="evidence" value="ECO:0007669"/>
    <property type="project" value="UniProtKB-SubCell"/>
</dbReference>
<dbReference type="GO" id="GO:0000981">
    <property type="term" value="F:DNA-binding transcription factor activity, RNA polymerase II-specific"/>
    <property type="evidence" value="ECO:0007669"/>
    <property type="project" value="TreeGrafter"/>
</dbReference>
<dbReference type="GO" id="GO:1990841">
    <property type="term" value="F:promoter-specific chromatin binding"/>
    <property type="evidence" value="ECO:0000250"/>
    <property type="project" value="UniProtKB"/>
</dbReference>
<dbReference type="GO" id="GO:0046983">
    <property type="term" value="F:protein dimerization activity"/>
    <property type="evidence" value="ECO:0007669"/>
    <property type="project" value="InterPro"/>
</dbReference>
<dbReference type="GO" id="GO:0000978">
    <property type="term" value="F:RNA polymerase II cis-regulatory region sequence-specific DNA binding"/>
    <property type="evidence" value="ECO:0007669"/>
    <property type="project" value="TreeGrafter"/>
</dbReference>
<dbReference type="GO" id="GO:0045663">
    <property type="term" value="P:positive regulation of myoblast differentiation"/>
    <property type="evidence" value="ECO:0007669"/>
    <property type="project" value="TreeGrafter"/>
</dbReference>
<dbReference type="GO" id="GO:0048743">
    <property type="term" value="P:positive regulation of skeletal muscle fiber development"/>
    <property type="evidence" value="ECO:0007669"/>
    <property type="project" value="TreeGrafter"/>
</dbReference>
<dbReference type="GO" id="GO:1905382">
    <property type="term" value="P:positive regulation of snRNA transcription by RNA polymerase II"/>
    <property type="evidence" value="ECO:0000250"/>
    <property type="project" value="UniProtKB"/>
</dbReference>
<dbReference type="GO" id="GO:0035914">
    <property type="term" value="P:skeletal muscle cell differentiation"/>
    <property type="evidence" value="ECO:0007669"/>
    <property type="project" value="TreeGrafter"/>
</dbReference>
<dbReference type="CDD" id="cd18936">
    <property type="entry name" value="bHLH_TS_MYOD1_Myf3"/>
    <property type="match status" value="1"/>
</dbReference>
<dbReference type="FunFam" id="4.10.280.10:FF:000005">
    <property type="entry name" value="Myogenic factor"/>
    <property type="match status" value="1"/>
</dbReference>
<dbReference type="Gene3D" id="4.10.280.10">
    <property type="entry name" value="Helix-loop-helix DNA-binding domain"/>
    <property type="match status" value="1"/>
</dbReference>
<dbReference type="InterPro" id="IPR011598">
    <property type="entry name" value="bHLH_dom"/>
</dbReference>
<dbReference type="InterPro" id="IPR036638">
    <property type="entry name" value="HLH_DNA-bd_sf"/>
</dbReference>
<dbReference type="InterPro" id="IPR022032">
    <property type="entry name" value="Myf5"/>
</dbReference>
<dbReference type="InterPro" id="IPR002546">
    <property type="entry name" value="MyoD_N"/>
</dbReference>
<dbReference type="InterPro" id="IPR039704">
    <property type="entry name" value="Myogenic_factor"/>
</dbReference>
<dbReference type="PANTHER" id="PTHR11534:SF2">
    <property type="entry name" value="MYOBLAST DETERMINATION PROTEIN 1"/>
    <property type="match status" value="1"/>
</dbReference>
<dbReference type="PANTHER" id="PTHR11534">
    <property type="entry name" value="MYOGENIC FACTOR"/>
    <property type="match status" value="1"/>
</dbReference>
<dbReference type="Pfam" id="PF01586">
    <property type="entry name" value="Basic"/>
    <property type="match status" value="1"/>
</dbReference>
<dbReference type="Pfam" id="PF00010">
    <property type="entry name" value="HLH"/>
    <property type="match status" value="1"/>
</dbReference>
<dbReference type="Pfam" id="PF12232">
    <property type="entry name" value="Myf5"/>
    <property type="match status" value="1"/>
</dbReference>
<dbReference type="SMART" id="SM00520">
    <property type="entry name" value="BASIC"/>
    <property type="match status" value="1"/>
</dbReference>
<dbReference type="SMART" id="SM00353">
    <property type="entry name" value="HLH"/>
    <property type="match status" value="1"/>
</dbReference>
<dbReference type="SUPFAM" id="SSF47459">
    <property type="entry name" value="HLH, helix-loop-helix DNA-binding domain"/>
    <property type="match status" value="1"/>
</dbReference>
<dbReference type="PROSITE" id="PS50888">
    <property type="entry name" value="BHLH"/>
    <property type="match status" value="1"/>
</dbReference>
<protein>
    <recommendedName>
        <fullName>Myoblast determination protein 1 homolog 2</fullName>
    </recommendedName>
    <alternativeName>
        <fullName>Myogenic factor 1-2</fullName>
    </alternativeName>
</protein>
<evidence type="ECO:0000250" key="1"/>
<evidence type="ECO:0000255" key="2">
    <source>
        <dbReference type="PROSITE-ProRule" id="PRU00981"/>
    </source>
</evidence>
<evidence type="ECO:0000256" key="3">
    <source>
        <dbReference type="SAM" id="MobiDB-lite"/>
    </source>
</evidence>
<feature type="chain" id="PRO_0000127369" description="Myoblast determination protein 1 homolog 2">
    <location>
        <begin position="1"/>
        <end position="275"/>
    </location>
</feature>
<feature type="domain" description="bHLH" evidence="2">
    <location>
        <begin position="84"/>
        <end position="135"/>
    </location>
</feature>
<feature type="region of interest" description="Disordered" evidence="3">
    <location>
        <begin position="232"/>
        <end position="275"/>
    </location>
</feature>
<feature type="compositionally biased region" description="Polar residues" evidence="3">
    <location>
        <begin position="232"/>
        <end position="265"/>
    </location>
</feature>
<organism>
    <name type="scientific">Oncorhynchus mykiss</name>
    <name type="common">Rainbow trout</name>
    <name type="synonym">Salmo gairdneri</name>
    <dbReference type="NCBI Taxonomy" id="8022"/>
    <lineage>
        <taxon>Eukaryota</taxon>
        <taxon>Metazoa</taxon>
        <taxon>Chordata</taxon>
        <taxon>Craniata</taxon>
        <taxon>Vertebrata</taxon>
        <taxon>Euteleostomi</taxon>
        <taxon>Actinopterygii</taxon>
        <taxon>Neopterygii</taxon>
        <taxon>Teleostei</taxon>
        <taxon>Protacanthopterygii</taxon>
        <taxon>Salmoniformes</taxon>
        <taxon>Salmonidae</taxon>
        <taxon>Salmoninae</taxon>
        <taxon>Oncorhynchus</taxon>
    </lineage>
</organism>
<proteinExistence type="evidence at transcript level"/>
<sequence length="275" mass="30507">MELSDISFPVTSADDFYDDPCFNTSDMHFFEDLDPRLVHVGLLKPDDHHYNEDEHIRAPSGHHQAGRCLLWACKACKRKTTNSDRRKAATMRERRRLGKVNDAFENLKRCTSNNPNQRLPKVEILRNAISYIESLQSLLRGQDGENYYPVLEHYSGDSDASSPQSNCSDGMMDYNAPTCTSARRSNYDSSYFAETPNADSRSNKNAAVSSLDCLSNIVERISTDTSACTVLSGQEGSEGSPCSPQEGSILSRNGGTVPSPTNCPQPSHDPIYQVL</sequence>